<gene>
    <name type="ordered locus">XCV2203</name>
</gene>
<comment type="function">
    <text evidence="1">Bifunctional serine/threonine kinase and phosphorylase involved in the regulation of the phosphoenolpyruvate synthase (PEPS) by catalyzing its phosphorylation/dephosphorylation.</text>
</comment>
<comment type="catalytic activity">
    <reaction evidence="1">
        <text>[pyruvate, water dikinase] + ADP = [pyruvate, water dikinase]-phosphate + AMP + H(+)</text>
        <dbReference type="Rhea" id="RHEA:46020"/>
        <dbReference type="Rhea" id="RHEA-COMP:11425"/>
        <dbReference type="Rhea" id="RHEA-COMP:11426"/>
        <dbReference type="ChEBI" id="CHEBI:15378"/>
        <dbReference type="ChEBI" id="CHEBI:43176"/>
        <dbReference type="ChEBI" id="CHEBI:68546"/>
        <dbReference type="ChEBI" id="CHEBI:456215"/>
        <dbReference type="ChEBI" id="CHEBI:456216"/>
        <dbReference type="EC" id="2.7.11.33"/>
    </reaction>
</comment>
<comment type="catalytic activity">
    <reaction evidence="1">
        <text>[pyruvate, water dikinase]-phosphate + phosphate + H(+) = [pyruvate, water dikinase] + diphosphate</text>
        <dbReference type="Rhea" id="RHEA:48580"/>
        <dbReference type="Rhea" id="RHEA-COMP:11425"/>
        <dbReference type="Rhea" id="RHEA-COMP:11426"/>
        <dbReference type="ChEBI" id="CHEBI:15378"/>
        <dbReference type="ChEBI" id="CHEBI:33019"/>
        <dbReference type="ChEBI" id="CHEBI:43176"/>
        <dbReference type="ChEBI" id="CHEBI:43474"/>
        <dbReference type="ChEBI" id="CHEBI:68546"/>
        <dbReference type="EC" id="2.7.4.28"/>
    </reaction>
</comment>
<comment type="similarity">
    <text evidence="1">Belongs to the pyruvate, phosphate/water dikinase regulatory protein family. PSRP subfamily.</text>
</comment>
<dbReference type="EC" id="2.7.11.33" evidence="1"/>
<dbReference type="EC" id="2.7.4.28" evidence="1"/>
<dbReference type="EMBL" id="AM039952">
    <property type="protein sequence ID" value="CAJ23880.1"/>
    <property type="molecule type" value="Genomic_DNA"/>
</dbReference>
<dbReference type="RefSeq" id="WP_003482830.1">
    <property type="nucleotide sequence ID" value="NZ_CP017190.1"/>
</dbReference>
<dbReference type="SMR" id="Q3BTH9"/>
<dbReference type="STRING" id="456327.BJD11_11385"/>
<dbReference type="KEGG" id="xcv:XCV2203"/>
<dbReference type="eggNOG" id="COG1806">
    <property type="taxonomic scope" value="Bacteria"/>
</dbReference>
<dbReference type="HOGENOM" id="CLU_046206_1_0_6"/>
<dbReference type="Proteomes" id="UP000007069">
    <property type="component" value="Chromosome"/>
</dbReference>
<dbReference type="GO" id="GO:0043531">
    <property type="term" value="F:ADP binding"/>
    <property type="evidence" value="ECO:0007669"/>
    <property type="project" value="UniProtKB-UniRule"/>
</dbReference>
<dbReference type="GO" id="GO:0005524">
    <property type="term" value="F:ATP binding"/>
    <property type="evidence" value="ECO:0007669"/>
    <property type="project" value="InterPro"/>
</dbReference>
<dbReference type="GO" id="GO:0016776">
    <property type="term" value="F:phosphotransferase activity, phosphate group as acceptor"/>
    <property type="evidence" value="ECO:0007669"/>
    <property type="project" value="UniProtKB-UniRule"/>
</dbReference>
<dbReference type="GO" id="GO:0004674">
    <property type="term" value="F:protein serine/threonine kinase activity"/>
    <property type="evidence" value="ECO:0007669"/>
    <property type="project" value="UniProtKB-UniRule"/>
</dbReference>
<dbReference type="HAMAP" id="MF_01062">
    <property type="entry name" value="PSRP"/>
    <property type="match status" value="1"/>
</dbReference>
<dbReference type="InterPro" id="IPR005177">
    <property type="entry name" value="Kinase-pyrophosphorylase"/>
</dbReference>
<dbReference type="InterPro" id="IPR026530">
    <property type="entry name" value="PSRP"/>
</dbReference>
<dbReference type="NCBIfam" id="NF003742">
    <property type="entry name" value="PRK05339.1"/>
    <property type="match status" value="1"/>
</dbReference>
<dbReference type="PANTHER" id="PTHR31756">
    <property type="entry name" value="PYRUVATE, PHOSPHATE DIKINASE REGULATORY PROTEIN 1, CHLOROPLASTIC"/>
    <property type="match status" value="1"/>
</dbReference>
<dbReference type="PANTHER" id="PTHR31756:SF3">
    <property type="entry name" value="PYRUVATE, PHOSPHATE DIKINASE REGULATORY PROTEIN 1, CHLOROPLASTIC"/>
    <property type="match status" value="1"/>
</dbReference>
<dbReference type="Pfam" id="PF03618">
    <property type="entry name" value="Kinase-PPPase"/>
    <property type="match status" value="1"/>
</dbReference>
<accession>Q3BTH9</accession>
<organism>
    <name type="scientific">Xanthomonas euvesicatoria pv. vesicatoria (strain 85-10)</name>
    <name type="common">Xanthomonas campestris pv. vesicatoria</name>
    <dbReference type="NCBI Taxonomy" id="316273"/>
    <lineage>
        <taxon>Bacteria</taxon>
        <taxon>Pseudomonadati</taxon>
        <taxon>Pseudomonadota</taxon>
        <taxon>Gammaproteobacteria</taxon>
        <taxon>Lysobacterales</taxon>
        <taxon>Lysobacteraceae</taxon>
        <taxon>Xanthomonas</taxon>
    </lineage>
</organism>
<reference key="1">
    <citation type="journal article" date="2005" name="J. Bacteriol.">
        <title>Insights into genome plasticity and pathogenicity of the plant pathogenic Bacterium Xanthomonas campestris pv. vesicatoria revealed by the complete genome sequence.</title>
        <authorList>
            <person name="Thieme F."/>
            <person name="Koebnik R."/>
            <person name="Bekel T."/>
            <person name="Berger C."/>
            <person name="Boch J."/>
            <person name="Buettner D."/>
            <person name="Caldana C."/>
            <person name="Gaigalat L."/>
            <person name="Goesmann A."/>
            <person name="Kay S."/>
            <person name="Kirchner O."/>
            <person name="Lanz C."/>
            <person name="Linke B."/>
            <person name="McHardy A.C."/>
            <person name="Meyer F."/>
            <person name="Mittenhuber G."/>
            <person name="Nies D.H."/>
            <person name="Niesbach-Kloesgen U."/>
            <person name="Patschkowski T."/>
            <person name="Rueckert C."/>
            <person name="Rupp O."/>
            <person name="Schneiker S."/>
            <person name="Schuster S.C."/>
            <person name="Vorhoelter F.J."/>
            <person name="Weber E."/>
            <person name="Puehler A."/>
            <person name="Bonas U."/>
            <person name="Bartels D."/>
            <person name="Kaiser O."/>
        </authorList>
    </citation>
    <scope>NUCLEOTIDE SEQUENCE [LARGE SCALE GENOMIC DNA]</scope>
    <source>
        <strain>85-10</strain>
    </source>
</reference>
<feature type="chain" id="PRO_0000196745" description="Putative phosphoenolpyruvate synthase regulatory protein">
    <location>
        <begin position="1"/>
        <end position="273"/>
    </location>
</feature>
<feature type="binding site" evidence="1">
    <location>
        <begin position="153"/>
        <end position="160"/>
    </location>
    <ligand>
        <name>ADP</name>
        <dbReference type="ChEBI" id="CHEBI:456216"/>
    </ligand>
</feature>
<keyword id="KW-0418">Kinase</keyword>
<keyword id="KW-0547">Nucleotide-binding</keyword>
<keyword id="KW-0723">Serine/threonine-protein kinase</keyword>
<keyword id="KW-0808">Transferase</keyword>
<name>PSRP_XANE5</name>
<sequence length="273" mass="30854">MSTIRPVFYVSDGTGITAETIGHSLLTQFSGFNFVTDRMSFIDDADKARDAAMRVRAAGERYQVRPVVVNSCVDPQLSMILAESGALMLDVFAPFIEPLERELNAPRHSRVGRAHGMVDFETYHRRINAMNFALSHDDGIALNYDEADVILVAVSRAGKTPTCIYLALHYGIRAANYPLTDEDLENEQLPPRLRNYRSKLFGLTIDPERLQQIRQERRANSRYSAAETCRREVAIAERMFQMERIPSLSTTNTSIEEISSKVLSTLGLQREMF</sequence>
<proteinExistence type="inferred from homology"/>
<protein>
    <recommendedName>
        <fullName evidence="1">Putative phosphoenolpyruvate synthase regulatory protein</fullName>
        <shortName evidence="1">PEP synthase regulatory protein</shortName>
        <shortName evidence="1">PSRP</shortName>
        <ecNumber evidence="1">2.7.11.33</ecNumber>
        <ecNumber evidence="1">2.7.4.28</ecNumber>
    </recommendedName>
    <alternativeName>
        <fullName evidence="1">Pyruvate, water dikinase regulatory protein</fullName>
    </alternativeName>
</protein>
<evidence type="ECO:0000255" key="1">
    <source>
        <dbReference type="HAMAP-Rule" id="MF_01062"/>
    </source>
</evidence>